<sequence length="166" mass="17529">MHRIDPSKLELEERVVTINRVAKVVKGGRRFRFAALVVVGDKNGHVGFGTGKAQEVPDAIRKAIEDAKKNLIAVPLVGTTIPHTINGHFGAGEVFLKPAAEGTGVIAGGPVRAVLELAGVQDILSKSLGSNTPINMIRATVNGLSELKRAEDVAKLRGKSVEELLG</sequence>
<feature type="chain" id="PRO_0000230332" description="Small ribosomal subunit protein uS5">
    <location>
        <begin position="1"/>
        <end position="166"/>
    </location>
</feature>
<feature type="domain" description="S5 DRBM" evidence="1">
    <location>
        <begin position="11"/>
        <end position="74"/>
    </location>
</feature>
<dbReference type="EMBL" id="CP000001">
    <property type="protein sequence ID" value="AAU20110.1"/>
    <property type="molecule type" value="Genomic_DNA"/>
</dbReference>
<dbReference type="RefSeq" id="WP_000554646.1">
    <property type="nucleotide sequence ID" value="NZ_CP009968.1"/>
</dbReference>
<dbReference type="SMR" id="Q63H73"/>
<dbReference type="GeneID" id="93010926"/>
<dbReference type="KEGG" id="bcz:BCE33L0121"/>
<dbReference type="PATRIC" id="fig|288681.22.peg.30"/>
<dbReference type="Proteomes" id="UP000002612">
    <property type="component" value="Chromosome"/>
</dbReference>
<dbReference type="GO" id="GO:0015935">
    <property type="term" value="C:small ribosomal subunit"/>
    <property type="evidence" value="ECO:0007669"/>
    <property type="project" value="InterPro"/>
</dbReference>
<dbReference type="GO" id="GO:0019843">
    <property type="term" value="F:rRNA binding"/>
    <property type="evidence" value="ECO:0007669"/>
    <property type="project" value="UniProtKB-UniRule"/>
</dbReference>
<dbReference type="GO" id="GO:0003735">
    <property type="term" value="F:structural constituent of ribosome"/>
    <property type="evidence" value="ECO:0007669"/>
    <property type="project" value="InterPro"/>
</dbReference>
<dbReference type="GO" id="GO:0006412">
    <property type="term" value="P:translation"/>
    <property type="evidence" value="ECO:0007669"/>
    <property type="project" value="UniProtKB-UniRule"/>
</dbReference>
<dbReference type="FunFam" id="3.30.160.20:FF:000001">
    <property type="entry name" value="30S ribosomal protein S5"/>
    <property type="match status" value="1"/>
</dbReference>
<dbReference type="FunFam" id="3.30.230.10:FF:000002">
    <property type="entry name" value="30S ribosomal protein S5"/>
    <property type="match status" value="1"/>
</dbReference>
<dbReference type="Gene3D" id="3.30.160.20">
    <property type="match status" value="1"/>
</dbReference>
<dbReference type="Gene3D" id="3.30.230.10">
    <property type="match status" value="1"/>
</dbReference>
<dbReference type="HAMAP" id="MF_01307_B">
    <property type="entry name" value="Ribosomal_uS5_B"/>
    <property type="match status" value="1"/>
</dbReference>
<dbReference type="InterPro" id="IPR020568">
    <property type="entry name" value="Ribosomal_Su5_D2-typ_SF"/>
</dbReference>
<dbReference type="InterPro" id="IPR000851">
    <property type="entry name" value="Ribosomal_uS5"/>
</dbReference>
<dbReference type="InterPro" id="IPR005712">
    <property type="entry name" value="Ribosomal_uS5_bac-type"/>
</dbReference>
<dbReference type="InterPro" id="IPR005324">
    <property type="entry name" value="Ribosomal_uS5_C"/>
</dbReference>
<dbReference type="InterPro" id="IPR013810">
    <property type="entry name" value="Ribosomal_uS5_N"/>
</dbReference>
<dbReference type="InterPro" id="IPR018192">
    <property type="entry name" value="Ribosomal_uS5_N_CS"/>
</dbReference>
<dbReference type="InterPro" id="IPR014721">
    <property type="entry name" value="Ribsml_uS5_D2-typ_fold_subgr"/>
</dbReference>
<dbReference type="NCBIfam" id="TIGR01021">
    <property type="entry name" value="rpsE_bact"/>
    <property type="match status" value="1"/>
</dbReference>
<dbReference type="PANTHER" id="PTHR48277">
    <property type="entry name" value="MITOCHONDRIAL RIBOSOMAL PROTEIN S5"/>
    <property type="match status" value="1"/>
</dbReference>
<dbReference type="PANTHER" id="PTHR48277:SF1">
    <property type="entry name" value="MITOCHONDRIAL RIBOSOMAL PROTEIN S5"/>
    <property type="match status" value="1"/>
</dbReference>
<dbReference type="Pfam" id="PF00333">
    <property type="entry name" value="Ribosomal_S5"/>
    <property type="match status" value="1"/>
</dbReference>
<dbReference type="Pfam" id="PF03719">
    <property type="entry name" value="Ribosomal_S5_C"/>
    <property type="match status" value="1"/>
</dbReference>
<dbReference type="SUPFAM" id="SSF54768">
    <property type="entry name" value="dsRNA-binding domain-like"/>
    <property type="match status" value="1"/>
</dbReference>
<dbReference type="SUPFAM" id="SSF54211">
    <property type="entry name" value="Ribosomal protein S5 domain 2-like"/>
    <property type="match status" value="1"/>
</dbReference>
<dbReference type="PROSITE" id="PS00585">
    <property type="entry name" value="RIBOSOMAL_S5"/>
    <property type="match status" value="1"/>
</dbReference>
<dbReference type="PROSITE" id="PS50881">
    <property type="entry name" value="S5_DSRBD"/>
    <property type="match status" value="1"/>
</dbReference>
<protein>
    <recommendedName>
        <fullName evidence="1">Small ribosomal subunit protein uS5</fullName>
    </recommendedName>
    <alternativeName>
        <fullName evidence="2">30S ribosomal protein S5</fullName>
    </alternativeName>
</protein>
<organism>
    <name type="scientific">Bacillus cereus (strain ZK / E33L)</name>
    <dbReference type="NCBI Taxonomy" id="288681"/>
    <lineage>
        <taxon>Bacteria</taxon>
        <taxon>Bacillati</taxon>
        <taxon>Bacillota</taxon>
        <taxon>Bacilli</taxon>
        <taxon>Bacillales</taxon>
        <taxon>Bacillaceae</taxon>
        <taxon>Bacillus</taxon>
        <taxon>Bacillus cereus group</taxon>
    </lineage>
</organism>
<proteinExistence type="inferred from homology"/>
<gene>
    <name evidence="1" type="primary">rpsE</name>
    <name type="ordered locus">BCE33L0121</name>
</gene>
<comment type="function">
    <text evidence="1">With S4 and S12 plays an important role in translational accuracy.</text>
</comment>
<comment type="function">
    <text evidence="1">Located at the back of the 30S subunit body where it stabilizes the conformation of the head with respect to the body.</text>
</comment>
<comment type="subunit">
    <text evidence="1">Part of the 30S ribosomal subunit. Contacts proteins S4 and S8.</text>
</comment>
<comment type="domain">
    <text>The N-terminal domain interacts with the head of the 30S subunit; the C-terminal domain interacts with the body and contacts protein S4. The interaction surface between S4 and S5 is involved in control of translational fidelity.</text>
</comment>
<comment type="similarity">
    <text evidence="1">Belongs to the universal ribosomal protein uS5 family.</text>
</comment>
<accession>Q63H73</accession>
<reference key="1">
    <citation type="journal article" date="2006" name="J. Bacteriol.">
        <title>Pathogenomic sequence analysis of Bacillus cereus and Bacillus thuringiensis isolates closely related to Bacillus anthracis.</title>
        <authorList>
            <person name="Han C.S."/>
            <person name="Xie G."/>
            <person name="Challacombe J.F."/>
            <person name="Altherr M.R."/>
            <person name="Bhotika S.S."/>
            <person name="Bruce D."/>
            <person name="Campbell C.S."/>
            <person name="Campbell M.L."/>
            <person name="Chen J."/>
            <person name="Chertkov O."/>
            <person name="Cleland C."/>
            <person name="Dimitrijevic M."/>
            <person name="Doggett N.A."/>
            <person name="Fawcett J.J."/>
            <person name="Glavina T."/>
            <person name="Goodwin L.A."/>
            <person name="Hill K.K."/>
            <person name="Hitchcock P."/>
            <person name="Jackson P.J."/>
            <person name="Keim P."/>
            <person name="Kewalramani A.R."/>
            <person name="Longmire J."/>
            <person name="Lucas S."/>
            <person name="Malfatti S."/>
            <person name="McMurry K."/>
            <person name="Meincke L.J."/>
            <person name="Misra M."/>
            <person name="Moseman B.L."/>
            <person name="Mundt M."/>
            <person name="Munk A.C."/>
            <person name="Okinaka R.T."/>
            <person name="Parson-Quintana B."/>
            <person name="Reilly L.P."/>
            <person name="Richardson P."/>
            <person name="Robinson D.L."/>
            <person name="Rubin E."/>
            <person name="Saunders E."/>
            <person name="Tapia R."/>
            <person name="Tesmer J.G."/>
            <person name="Thayer N."/>
            <person name="Thompson L.S."/>
            <person name="Tice H."/>
            <person name="Ticknor L.O."/>
            <person name="Wills P.L."/>
            <person name="Brettin T.S."/>
            <person name="Gilna P."/>
        </authorList>
    </citation>
    <scope>NUCLEOTIDE SEQUENCE [LARGE SCALE GENOMIC DNA]</scope>
    <source>
        <strain>ZK / E33L</strain>
    </source>
</reference>
<evidence type="ECO:0000255" key="1">
    <source>
        <dbReference type="HAMAP-Rule" id="MF_01307"/>
    </source>
</evidence>
<evidence type="ECO:0000305" key="2"/>
<keyword id="KW-0687">Ribonucleoprotein</keyword>
<keyword id="KW-0689">Ribosomal protein</keyword>
<keyword id="KW-0694">RNA-binding</keyword>
<keyword id="KW-0699">rRNA-binding</keyword>
<name>RS5_BACCZ</name>